<keyword id="KW-0002">3D-structure</keyword>
<keyword id="KW-0007">Acetylation</keyword>
<keyword id="KW-0106">Calcium</keyword>
<keyword id="KW-0963">Cytoplasm</keyword>
<keyword id="KW-1015">Disulfide bond</keyword>
<keyword id="KW-0479">Metal-binding</keyword>
<keyword id="KW-0539">Nucleus</keyword>
<keyword id="KW-0597">Phosphoprotein</keyword>
<keyword id="KW-1185">Reference proteome</keyword>
<keyword id="KW-0677">Repeat</keyword>
<gene>
    <name type="primary">S100A11</name>
    <name type="synonym">S100C</name>
</gene>
<comment type="function">
    <text evidence="1">Facilitates the differentiation and the cornification of keratinocytes.</text>
</comment>
<comment type="subunit">
    <text evidence="1">Homodimer; disulfide-linked.</text>
</comment>
<comment type="subcellular location">
    <subcellularLocation>
        <location>Cytoplasm</location>
    </subcellularLocation>
    <subcellularLocation>
        <location evidence="1">Nucleus</location>
    </subcellularLocation>
</comment>
<comment type="PTM">
    <text evidence="1">Phosphorylation at Thr-8 significantly suppresses homodimerization and promotes association with NCL/nucleolin which induces nuclear translocation.</text>
</comment>
<comment type="miscellaneous">
    <text evidence="1">Binds two calcium ions per molecule with an affinity similar to that of the S100 proteins.</text>
</comment>
<comment type="similarity">
    <text evidence="5">Belongs to the S-100 family.</text>
</comment>
<feature type="chain" id="PRO_0000144011" description="Protein S100-A11">
    <location>
        <begin position="1"/>
        <end position="99"/>
    </location>
</feature>
<feature type="domain" description="EF-hand 1" evidence="3">
    <location>
        <begin position="10"/>
        <end position="47"/>
    </location>
</feature>
<feature type="domain" description="EF-hand 2" evidence="3">
    <location>
        <begin position="53"/>
        <end position="88"/>
    </location>
</feature>
<feature type="binding site" evidence="5">
    <location>
        <position position="29"/>
    </location>
    <ligand>
        <name>Ca(2+)</name>
        <dbReference type="ChEBI" id="CHEBI:29108"/>
        <label>1</label>
        <note>low affinity</note>
    </ligand>
</feature>
<feature type="binding site" evidence="5">
    <location>
        <position position="31"/>
    </location>
    <ligand>
        <name>Ca(2+)</name>
        <dbReference type="ChEBI" id="CHEBI:29108"/>
        <label>1</label>
        <note>low affinity</note>
    </ligand>
</feature>
<feature type="binding site" evidence="5">
    <location>
        <position position="36"/>
    </location>
    <ligand>
        <name>Ca(2+)</name>
        <dbReference type="ChEBI" id="CHEBI:29108"/>
        <label>1</label>
        <note>low affinity</note>
    </ligand>
</feature>
<feature type="binding site" evidence="3">
    <location>
        <position position="66"/>
    </location>
    <ligand>
        <name>Ca(2+)</name>
        <dbReference type="ChEBI" id="CHEBI:29108"/>
        <label>2</label>
        <note>high affinity</note>
    </ligand>
</feature>
<feature type="binding site" evidence="3">
    <location>
        <position position="68"/>
    </location>
    <ligand>
        <name>Ca(2+)</name>
        <dbReference type="ChEBI" id="CHEBI:29108"/>
        <label>2</label>
        <note>high affinity</note>
    </ligand>
</feature>
<feature type="binding site" evidence="3">
    <location>
        <position position="70"/>
    </location>
    <ligand>
        <name>Ca(2+)</name>
        <dbReference type="ChEBI" id="CHEBI:29108"/>
        <label>2</label>
        <note>high affinity</note>
    </ligand>
</feature>
<feature type="binding site" evidence="3">
    <location>
        <position position="72"/>
    </location>
    <ligand>
        <name>Ca(2+)</name>
        <dbReference type="ChEBI" id="CHEBI:29108"/>
        <label>2</label>
        <note>high affinity</note>
    </ligand>
</feature>
<feature type="binding site" evidence="3">
    <location>
        <position position="77"/>
    </location>
    <ligand>
        <name>Ca(2+)</name>
        <dbReference type="ChEBI" id="CHEBI:29108"/>
        <label>2</label>
        <note>high affinity</note>
    </ligand>
</feature>
<feature type="modified residue" description="N-acetylmethionine" evidence="4">
    <location>
        <position position="1"/>
    </location>
</feature>
<feature type="modified residue" description="Phosphothreonine" evidence="2">
    <location>
        <position position="8"/>
    </location>
</feature>
<feature type="disulfide bond" description="Interchain" evidence="1">
    <location>
        <position position="11"/>
    </location>
</feature>
<feature type="helix" evidence="6">
    <location>
        <begin position="7"/>
        <end position="23"/>
    </location>
</feature>
<feature type="helix" evidence="6">
    <location>
        <begin position="34"/>
        <end position="41"/>
    </location>
</feature>
<feature type="helix" evidence="6">
    <location>
        <begin position="46"/>
        <end position="51"/>
    </location>
</feature>
<feature type="helix" evidence="6">
    <location>
        <begin position="56"/>
        <end position="65"/>
    </location>
</feature>
<feature type="strand" evidence="6">
    <location>
        <begin position="70"/>
        <end position="73"/>
    </location>
</feature>
<feature type="helix" evidence="6">
    <location>
        <begin position="75"/>
        <end position="97"/>
    </location>
</feature>
<reference key="1">
    <citation type="journal article" date="1991" name="FEBS Lett.">
        <title>Molecular cloning and expression of the cDNA coding for a new member of the S100 protein family from porcine cardiac muscle.</title>
        <authorList>
            <person name="Ohta H."/>
            <person name="Sasaki T."/>
            <person name="Naka M."/>
            <person name="Hiraoka O."/>
            <person name="Miyamoto C."/>
            <person name="Furuichi Y."/>
            <person name="Tanaka T."/>
        </authorList>
    </citation>
    <scope>NUCLEOTIDE SEQUENCE [MRNA]</scope>
    <scope>ACETYLATION AT MET-1</scope>
    <source>
        <tissue>Heart muscle</tissue>
    </source>
</reference>
<reference key="2">
    <citation type="journal article" date="1998" name="Biochem. Biophys. Res. Commun.">
        <title>A unique exon-intron organization of a porcine S100C gene: close evolutionary relationship to calmodulin genes.</title>
        <authorList>
            <person name="Nakamura T."/>
            <person name="Hayashi M."/>
            <person name="Kato A."/>
            <person name="Sawazaki T."/>
            <person name="Yasue H."/>
            <person name="Nakano T."/>
            <person name="Tanaka T."/>
        </authorList>
    </citation>
    <scope>NUCLEOTIDE SEQUENCE [GENOMIC DNA]</scope>
</reference>
<reference key="3">
    <citation type="journal article" date="2000" name="Structure">
        <title>Structural basis of the Ca(2+)-dependent association between S100C (S100A11) and its target, the N-terminal part of annexin I.</title>
        <authorList>
            <person name="Rety S."/>
            <person name="Osterloh D."/>
            <person name="Arie J.-P."/>
            <person name="Tabaries S."/>
            <person name="Seeman J."/>
            <person name="Russo-Marie F."/>
            <person name="Gerke V."/>
            <person name="Lewit-Bentley A."/>
        </authorList>
    </citation>
    <scope>X-RAY CRYSTALLOGRAPHY (2.3 ANGSTROMS)</scope>
</reference>
<evidence type="ECO:0000250" key="1"/>
<evidence type="ECO:0000250" key="2">
    <source>
        <dbReference type="UniProtKB" id="P31949"/>
    </source>
</evidence>
<evidence type="ECO:0000255" key="3">
    <source>
        <dbReference type="PROSITE-ProRule" id="PRU00448"/>
    </source>
</evidence>
<evidence type="ECO:0000269" key="4">
    <source>
    </source>
</evidence>
<evidence type="ECO:0000305" key="5"/>
<evidence type="ECO:0007829" key="6">
    <source>
        <dbReference type="PDB" id="1QLS"/>
    </source>
</evidence>
<accession>P31950</accession>
<sequence>MAKRPTETERCIESLIAIFQKHAGRDGNNTKISKTEFLIFMNTELAAFTQNQKDPGVLDRMMKKLDLDSDGQLDFQEFLNLIGGLAIACHDSFIKSTQK</sequence>
<organism>
    <name type="scientific">Sus scrofa</name>
    <name type="common">Pig</name>
    <dbReference type="NCBI Taxonomy" id="9823"/>
    <lineage>
        <taxon>Eukaryota</taxon>
        <taxon>Metazoa</taxon>
        <taxon>Chordata</taxon>
        <taxon>Craniata</taxon>
        <taxon>Vertebrata</taxon>
        <taxon>Euteleostomi</taxon>
        <taxon>Mammalia</taxon>
        <taxon>Eutheria</taxon>
        <taxon>Laurasiatheria</taxon>
        <taxon>Artiodactyla</taxon>
        <taxon>Suina</taxon>
        <taxon>Suidae</taxon>
        <taxon>Sus</taxon>
    </lineage>
</organism>
<proteinExistence type="evidence at protein level"/>
<protein>
    <recommendedName>
        <fullName>Protein S100-A11</fullName>
    </recommendedName>
    <alternativeName>
        <fullName>Calgizzarin</fullName>
    </alternativeName>
    <alternativeName>
        <fullName>Protein S100-C</fullName>
    </alternativeName>
    <alternativeName>
        <fullName>S100 calcium-binding protein A11</fullName>
    </alternativeName>
</protein>
<name>S10AB_PIG</name>
<dbReference type="EMBL" id="AB004800">
    <property type="protein sequence ID" value="BAA20521.1"/>
    <property type="molecule type" value="mRNA"/>
</dbReference>
<dbReference type="EMBL" id="AB003363">
    <property type="protein sequence ID" value="BAA25189.1"/>
    <property type="molecule type" value="Genomic_DNA"/>
</dbReference>
<dbReference type="PIR" id="S20342">
    <property type="entry name" value="S20342"/>
</dbReference>
<dbReference type="RefSeq" id="NP_001004045.1">
    <property type="nucleotide sequence ID" value="NM_001004045.1"/>
</dbReference>
<dbReference type="RefSeq" id="XP_003361619.1">
    <property type="nucleotide sequence ID" value="XM_003361571.2"/>
</dbReference>
<dbReference type="PDB" id="1QLS">
    <property type="method" value="X-ray"/>
    <property type="resolution" value="2.30 A"/>
    <property type="chains" value="A=1-99"/>
</dbReference>
<dbReference type="PDBsum" id="1QLS"/>
<dbReference type="SMR" id="P31950"/>
<dbReference type="FunCoup" id="P31950">
    <property type="interactions" value="961"/>
</dbReference>
<dbReference type="STRING" id="9823.ENSSSCP00000067377"/>
<dbReference type="iPTMnet" id="P31950"/>
<dbReference type="PaxDb" id="9823-ENSSSCP00000021681"/>
<dbReference type="PeptideAtlas" id="P31950"/>
<dbReference type="Ensembl" id="ENSSSCT00000035409.3">
    <property type="protein sequence ID" value="ENSSSCP00000028457.1"/>
    <property type="gene ID" value="ENSSSCG00000006610.6"/>
</dbReference>
<dbReference type="Ensembl" id="ENSSSCT00015101194.1">
    <property type="protein sequence ID" value="ENSSSCP00015041913.1"/>
    <property type="gene ID" value="ENSSSCG00015075165.1"/>
</dbReference>
<dbReference type="Ensembl" id="ENSSSCT00025069103.1">
    <property type="protein sequence ID" value="ENSSSCP00025029763.1"/>
    <property type="gene ID" value="ENSSSCG00025050557.1"/>
</dbReference>
<dbReference type="Ensembl" id="ENSSSCT00030096642.1">
    <property type="protein sequence ID" value="ENSSSCP00030044556.1"/>
    <property type="gene ID" value="ENSSSCG00030069067.1"/>
</dbReference>
<dbReference type="Ensembl" id="ENSSSCT00035072787.1">
    <property type="protein sequence ID" value="ENSSSCP00035029530.1"/>
    <property type="gene ID" value="ENSSSCG00035054556.1"/>
</dbReference>
<dbReference type="Ensembl" id="ENSSSCT00040102009.1">
    <property type="protein sequence ID" value="ENSSSCP00040046035.1"/>
    <property type="gene ID" value="ENSSSCG00040073855.1"/>
</dbReference>
<dbReference type="Ensembl" id="ENSSSCT00045013805.1">
    <property type="protein sequence ID" value="ENSSSCP00045009550.1"/>
    <property type="gene ID" value="ENSSSCG00045008211.1"/>
</dbReference>
<dbReference type="Ensembl" id="ENSSSCT00050001666.1">
    <property type="protein sequence ID" value="ENSSSCP00050000475.1"/>
    <property type="gene ID" value="ENSSSCG00050001387.1"/>
</dbReference>
<dbReference type="Ensembl" id="ENSSSCT00055051545.1">
    <property type="protein sequence ID" value="ENSSSCP00055041194.1"/>
    <property type="gene ID" value="ENSSSCG00055026074.1"/>
</dbReference>
<dbReference type="Ensembl" id="ENSSSCT00060072493.1">
    <property type="protein sequence ID" value="ENSSSCP00060031279.1"/>
    <property type="gene ID" value="ENSSSCG00060053238.1"/>
</dbReference>
<dbReference type="Ensembl" id="ENSSSCT00065062219.1">
    <property type="protein sequence ID" value="ENSSSCP00065026971.1"/>
    <property type="gene ID" value="ENSSSCG00065045455.1"/>
</dbReference>
<dbReference type="Ensembl" id="ENSSSCT00070056208.1">
    <property type="protein sequence ID" value="ENSSSCP00070047742.1"/>
    <property type="gene ID" value="ENSSSCG00070028026.1"/>
</dbReference>
<dbReference type="Ensembl" id="ENSSSCT00085038366">
    <property type="protein sequence ID" value="ENSSSCP00085026629"/>
    <property type="gene ID" value="ENSSSCG00085020141"/>
</dbReference>
<dbReference type="Ensembl" id="ENSSSCT00105011873">
    <property type="protein sequence ID" value="ENSSSCP00105008800"/>
    <property type="gene ID" value="ENSSSCG00105005824"/>
</dbReference>
<dbReference type="Ensembl" id="ENSSSCT00110047278">
    <property type="protein sequence ID" value="ENSSSCP00110033282"/>
    <property type="gene ID" value="ENSSSCG00110024450"/>
</dbReference>
<dbReference type="Ensembl" id="ENSSSCT00115015383">
    <property type="protein sequence ID" value="ENSSSCP00115014522"/>
    <property type="gene ID" value="ENSSSCG00115008807"/>
</dbReference>
<dbReference type="Ensembl" id="ENSSSCT00130051606">
    <property type="protein sequence ID" value="ENSSSCP00130036684"/>
    <property type="gene ID" value="ENSSSCG00130026509"/>
</dbReference>
<dbReference type="GeneID" id="445534"/>
<dbReference type="KEGG" id="ssc:445534"/>
<dbReference type="CTD" id="6282"/>
<dbReference type="VGNC" id="VGNC:92537">
    <property type="gene designation" value="S100A11"/>
</dbReference>
<dbReference type="eggNOG" id="ENOG502SS6H">
    <property type="taxonomic scope" value="Eukaryota"/>
</dbReference>
<dbReference type="GeneTree" id="ENSGT00940000154172"/>
<dbReference type="HOGENOM" id="CLU_138624_1_0_1"/>
<dbReference type="InParanoid" id="P31950"/>
<dbReference type="OMA" id="MACEKCY"/>
<dbReference type="OrthoDB" id="9451669at2759"/>
<dbReference type="TreeFam" id="TF332727"/>
<dbReference type="Reactome" id="R-SSC-6798695">
    <property type="pathway name" value="Neutrophil degranulation"/>
</dbReference>
<dbReference type="EvolutionaryTrace" id="P31950"/>
<dbReference type="Proteomes" id="UP000008227">
    <property type="component" value="Chromosome 4"/>
</dbReference>
<dbReference type="Proteomes" id="UP000314985">
    <property type="component" value="Chromosome 4"/>
</dbReference>
<dbReference type="Proteomes" id="UP000694570">
    <property type="component" value="Unplaced"/>
</dbReference>
<dbReference type="Proteomes" id="UP000694571">
    <property type="component" value="Unplaced"/>
</dbReference>
<dbReference type="Proteomes" id="UP000694720">
    <property type="component" value="Unplaced"/>
</dbReference>
<dbReference type="Proteomes" id="UP000694722">
    <property type="component" value="Unplaced"/>
</dbReference>
<dbReference type="Proteomes" id="UP000694723">
    <property type="component" value="Unplaced"/>
</dbReference>
<dbReference type="Proteomes" id="UP000694724">
    <property type="component" value="Unplaced"/>
</dbReference>
<dbReference type="Proteomes" id="UP000694725">
    <property type="component" value="Unplaced"/>
</dbReference>
<dbReference type="Proteomes" id="UP000694726">
    <property type="component" value="Unplaced"/>
</dbReference>
<dbReference type="Proteomes" id="UP000694727">
    <property type="component" value="Unplaced"/>
</dbReference>
<dbReference type="Proteomes" id="UP000694728">
    <property type="component" value="Unplaced"/>
</dbReference>
<dbReference type="Bgee" id="ENSSSCG00000006610">
    <property type="expression patterns" value="Expressed in hindlimb bud and 43 other cell types or tissues"/>
</dbReference>
<dbReference type="ExpressionAtlas" id="P31950">
    <property type="expression patterns" value="baseline and differential"/>
</dbReference>
<dbReference type="GO" id="GO:0005737">
    <property type="term" value="C:cytoplasm"/>
    <property type="evidence" value="ECO:0000318"/>
    <property type="project" value="GO_Central"/>
</dbReference>
<dbReference type="GO" id="GO:0005634">
    <property type="term" value="C:nucleus"/>
    <property type="evidence" value="ECO:0007669"/>
    <property type="project" value="UniProtKB-SubCell"/>
</dbReference>
<dbReference type="GO" id="GO:0005509">
    <property type="term" value="F:calcium ion binding"/>
    <property type="evidence" value="ECO:0000318"/>
    <property type="project" value="GO_Central"/>
</dbReference>
<dbReference type="GO" id="GO:0048306">
    <property type="term" value="F:calcium-dependent protein binding"/>
    <property type="evidence" value="ECO:0000318"/>
    <property type="project" value="GO_Central"/>
</dbReference>
<dbReference type="GO" id="GO:0044548">
    <property type="term" value="F:S100 protein binding"/>
    <property type="evidence" value="ECO:0000318"/>
    <property type="project" value="GO_Central"/>
</dbReference>
<dbReference type="GO" id="GO:0042127">
    <property type="term" value="P:regulation of cell population proliferation"/>
    <property type="evidence" value="ECO:0007669"/>
    <property type="project" value="InterPro"/>
</dbReference>
<dbReference type="CDD" id="cd05023">
    <property type="entry name" value="S-100A11"/>
    <property type="match status" value="1"/>
</dbReference>
<dbReference type="Gene3D" id="1.10.238.10">
    <property type="entry name" value="EF-hand"/>
    <property type="match status" value="1"/>
</dbReference>
<dbReference type="IDEAL" id="IID50073"/>
<dbReference type="InterPro" id="IPR011992">
    <property type="entry name" value="EF-hand-dom_pair"/>
</dbReference>
<dbReference type="InterPro" id="IPR018247">
    <property type="entry name" value="EF_Hand_1_Ca_BS"/>
</dbReference>
<dbReference type="InterPro" id="IPR002048">
    <property type="entry name" value="EF_hand_dom"/>
</dbReference>
<dbReference type="InterPro" id="IPR001751">
    <property type="entry name" value="S100/CaBP7/8-like_CS"/>
</dbReference>
<dbReference type="InterPro" id="IPR013787">
    <property type="entry name" value="S100_Ca-bd_sub"/>
</dbReference>
<dbReference type="InterPro" id="IPR028482">
    <property type="entry name" value="S100A11"/>
</dbReference>
<dbReference type="PANTHER" id="PTHR11639:SF60">
    <property type="entry name" value="PROTEIN S100-A11"/>
    <property type="match status" value="1"/>
</dbReference>
<dbReference type="PANTHER" id="PTHR11639">
    <property type="entry name" value="S100 CALCIUM-BINDING PROTEIN"/>
    <property type="match status" value="1"/>
</dbReference>
<dbReference type="Pfam" id="PF00036">
    <property type="entry name" value="EF-hand_1"/>
    <property type="match status" value="1"/>
</dbReference>
<dbReference type="Pfam" id="PF01023">
    <property type="entry name" value="S_100"/>
    <property type="match status" value="1"/>
</dbReference>
<dbReference type="SMART" id="SM00054">
    <property type="entry name" value="EFh"/>
    <property type="match status" value="1"/>
</dbReference>
<dbReference type="SMART" id="SM01394">
    <property type="entry name" value="S_100"/>
    <property type="match status" value="1"/>
</dbReference>
<dbReference type="SUPFAM" id="SSF47473">
    <property type="entry name" value="EF-hand"/>
    <property type="match status" value="1"/>
</dbReference>
<dbReference type="PROSITE" id="PS00018">
    <property type="entry name" value="EF_HAND_1"/>
    <property type="match status" value="1"/>
</dbReference>
<dbReference type="PROSITE" id="PS50222">
    <property type="entry name" value="EF_HAND_2"/>
    <property type="match status" value="2"/>
</dbReference>
<dbReference type="PROSITE" id="PS00303">
    <property type="entry name" value="S100_CABP"/>
    <property type="match status" value="1"/>
</dbReference>